<feature type="signal peptide" evidence="3">
    <location>
        <begin position="1"/>
        <end position="23"/>
    </location>
</feature>
<feature type="chain" id="PRO_0000221092" description="Insulin-like growth factor 2">
    <location>
        <begin position="24"/>
        <end position="91"/>
    </location>
</feature>
<feature type="propeptide" id="PRO_0000370382" description="E peptide">
    <location>
        <begin position="92"/>
        <end position="187"/>
    </location>
</feature>
<feature type="region of interest" description="B">
    <location>
        <begin position="25"/>
        <end position="51"/>
    </location>
</feature>
<feature type="region of interest" description="C">
    <location>
        <begin position="52"/>
        <end position="64"/>
    </location>
</feature>
<feature type="region of interest" description="A">
    <location>
        <begin position="64"/>
        <end position="85"/>
    </location>
</feature>
<feature type="region of interest" description="D">
    <location>
        <begin position="86"/>
        <end position="91"/>
    </location>
</feature>
<feature type="region of interest" description="Disordered" evidence="4">
    <location>
        <begin position="162"/>
        <end position="187"/>
    </location>
</feature>
<feature type="site" description="Important for interaction with integrin" evidence="2">
    <location>
        <position position="47"/>
    </location>
</feature>
<feature type="site" description="Important for interaction with integrin" evidence="2">
    <location>
        <position position="57"/>
    </location>
</feature>
<feature type="site" description="Important for interaction with integrin" evidence="2">
    <location>
        <position position="60"/>
    </location>
</feature>
<feature type="site" description="Important for interaction with integrin" evidence="2">
    <location>
        <position position="61"/>
    </location>
</feature>
<feature type="disulfide bond" evidence="1">
    <location>
        <begin position="32"/>
        <end position="71"/>
    </location>
</feature>
<feature type="disulfide bond" evidence="1">
    <location>
        <begin position="44"/>
        <end position="84"/>
    </location>
</feature>
<feature type="disulfide bond" evidence="1">
    <location>
        <begin position="70"/>
        <end position="75"/>
    </location>
</feature>
<feature type="sequence conflict" description="In Ref. 3; AA sequence." evidence="6" ref="3">
    <location>
        <position position="64"/>
    </location>
</feature>
<reference key="1">
    <citation type="journal article" date="1996" name="Gen. Comp. Endocrinol.">
        <title>Nucleotide sequence and genomic structure of the chicken insulin-like growth factor-II (IGF-II) coding region.</title>
        <authorList>
            <person name="Darling D.C."/>
            <person name="Brickell P.M."/>
        </authorList>
    </citation>
    <scope>NUCLEOTIDE SEQUENCE [GENOMIC DNA]</scope>
</reference>
<reference key="2">
    <citation type="journal article" date="2003" name="Poult. Sci.">
        <title>Identification of three single nucleotide polymorphisms in the chicken insulin-like growth factor 1 and 2 genes and their associations with growth and feeding traits.</title>
        <authorList>
            <person name="Amills M."/>
            <person name="Jimenez N."/>
            <person name="Villalba D."/>
            <person name="Tor M."/>
            <person name="Molina E."/>
            <person name="Cubilo D."/>
            <person name="Marcos C."/>
            <person name="Francesch A."/>
            <person name="Sanchez A."/>
            <person name="Estany J."/>
        </authorList>
    </citation>
    <scope>NUCLEOTIDE SEQUENCE [MRNA]</scope>
    <source>
        <tissue>Liver</tissue>
    </source>
</reference>
<reference key="3">
    <citation type="journal article" date="1990" name="J. Endocrinol.">
        <title>Chemical and biological characterization of chicken insulin-like growth factor-II.</title>
        <authorList>
            <person name="Kallincos N.C."/>
            <person name="Wallace J.C."/>
            <person name="Francis G.L."/>
            <person name="Ballard F.J."/>
        </authorList>
    </citation>
    <scope>PROTEIN SEQUENCE OF 25-91</scope>
</reference>
<reference key="4">
    <citation type="journal article" date="1988" name="J. Endocrinol.">
        <title>Purification, partial sequences and properties of chicken insulin-like growth factors.</title>
        <authorList>
            <person name="Dawe S.R."/>
            <person name="Francis G.L."/>
            <person name="McNamara P.J."/>
            <person name="Wallace J.C."/>
            <person name="Ballard F.J."/>
        </authorList>
    </citation>
    <scope>PROTEIN SEQUENCE OF 25-60</scope>
</reference>
<accession>P33717</accession>
<accession>P79890</accession>
<accession>Q7ZZT6</accession>
<name>IGF2_CHICK</name>
<comment type="function">
    <text evidence="2">The insulin-like growth factors, isolated from plasma, are structurally and functionally related to insulin but have a much higher growth-promoting activity. Acts as a ligand for integrin which is required for IGF2 signaling.</text>
</comment>
<comment type="subcellular location">
    <subcellularLocation>
        <location evidence="2">Secreted</location>
    </subcellularLocation>
</comment>
<comment type="similarity">
    <text evidence="6">Belongs to the insulin family.</text>
</comment>
<evidence type="ECO:0000250" key="1"/>
<evidence type="ECO:0000250" key="2">
    <source>
        <dbReference type="UniProtKB" id="P01344"/>
    </source>
</evidence>
<evidence type="ECO:0000255" key="3"/>
<evidence type="ECO:0000256" key="4">
    <source>
        <dbReference type="SAM" id="MobiDB-lite"/>
    </source>
</evidence>
<evidence type="ECO:0000303" key="5">
    <source>
    </source>
</evidence>
<evidence type="ECO:0000305" key="6"/>
<proteinExistence type="evidence at protein level"/>
<protein>
    <recommendedName>
        <fullName evidence="2">Insulin-like growth factor 2</fullName>
    </recommendedName>
    <alternativeName>
        <fullName evidence="5">Insulin-like growth factor II</fullName>
        <shortName evidence="5">IGF-II</shortName>
    </alternativeName>
</protein>
<sequence length="187" mass="20837">MCAARQILLLLLAFLAYALDSAAAYGTAETLCGGELVDTLQFVCGDRGFYFSRPVGRNNRRINRGIVEECCFRSCDLALLETYCAKSVKSERDLSATSLAGLPALNKESFQKPSHAKYSKYNVWQKKSSQRLQREVPGILRARRYRWQAEGLQAAEEARAMHRPLISLPSQRPPAPRASPEATGPQE</sequence>
<dbReference type="EMBL" id="S82962">
    <property type="protein sequence ID" value="AAB46818.1"/>
    <property type="molecule type" value="Genomic_DNA"/>
</dbReference>
<dbReference type="EMBL" id="S82960">
    <property type="protein sequence ID" value="AAB46818.1"/>
    <property type="status" value="JOINED"/>
    <property type="molecule type" value="Genomic_DNA"/>
</dbReference>
<dbReference type="EMBL" id="AY267181">
    <property type="protein sequence ID" value="AAP22173.1"/>
    <property type="molecule type" value="mRNA"/>
</dbReference>
<dbReference type="PIR" id="A60740">
    <property type="entry name" value="A60740"/>
</dbReference>
<dbReference type="PIR" id="T10897">
    <property type="entry name" value="T10897"/>
</dbReference>
<dbReference type="RefSeq" id="NP_001025513.1">
    <property type="nucleotide sequence ID" value="NM_001030342.5"/>
</dbReference>
<dbReference type="SMR" id="P33717"/>
<dbReference type="FunCoup" id="P33717">
    <property type="interactions" value="182"/>
</dbReference>
<dbReference type="STRING" id="9031.ENSGALP00000048743"/>
<dbReference type="PaxDb" id="9031-ENSGALP00000010570"/>
<dbReference type="GeneID" id="395097"/>
<dbReference type="KEGG" id="gga:395097"/>
<dbReference type="CTD" id="3481"/>
<dbReference type="VEuPathDB" id="HostDB:geneid_395097"/>
<dbReference type="eggNOG" id="ENOG502S0I0">
    <property type="taxonomic scope" value="Eukaryota"/>
</dbReference>
<dbReference type="HOGENOM" id="CLU_092464_1_0_1"/>
<dbReference type="InParanoid" id="P33717"/>
<dbReference type="OMA" id="KVQRMCA"/>
<dbReference type="OrthoDB" id="9449995at2759"/>
<dbReference type="PhylomeDB" id="P33717"/>
<dbReference type="TreeFam" id="TF332820"/>
<dbReference type="Reactome" id="R-GGA-114608">
    <property type="pathway name" value="Platelet degranulation"/>
</dbReference>
<dbReference type="Reactome" id="R-GGA-2404192">
    <property type="pathway name" value="Signaling by Type 1 Insulin-like Growth Factor 1 Receptor (IGF1R)"/>
</dbReference>
<dbReference type="Reactome" id="R-GGA-2428928">
    <property type="pathway name" value="IRS-related events triggered by IGF1R"/>
</dbReference>
<dbReference type="Reactome" id="R-GGA-2428933">
    <property type="pathway name" value="SHC-related events triggered by IGF1R"/>
</dbReference>
<dbReference type="Reactome" id="R-GGA-381426">
    <property type="pathway name" value="Regulation of Insulin-like Growth Factor (IGF) transport and uptake by Insulin-like Growth Factor Binding Proteins (IGFBPs)"/>
</dbReference>
<dbReference type="PRO" id="PR:P33717"/>
<dbReference type="Proteomes" id="UP000000539">
    <property type="component" value="Chromosome 5"/>
</dbReference>
<dbReference type="Bgee" id="ENSGALG00000035282">
    <property type="expression patterns" value="Expressed in liver and 13 other cell types or tissues"/>
</dbReference>
<dbReference type="GO" id="GO:0005615">
    <property type="term" value="C:extracellular space"/>
    <property type="evidence" value="ECO:0000314"/>
    <property type="project" value="AgBase"/>
</dbReference>
<dbReference type="GO" id="GO:0008083">
    <property type="term" value="F:growth factor activity"/>
    <property type="evidence" value="ECO:0000318"/>
    <property type="project" value="GO_Central"/>
</dbReference>
<dbReference type="GO" id="GO:0005179">
    <property type="term" value="F:hormone activity"/>
    <property type="evidence" value="ECO:0007669"/>
    <property type="project" value="InterPro"/>
</dbReference>
<dbReference type="GO" id="GO:0005159">
    <property type="term" value="F:insulin-like growth factor receptor binding"/>
    <property type="evidence" value="ECO:0000318"/>
    <property type="project" value="GO_Central"/>
</dbReference>
<dbReference type="GO" id="GO:0005178">
    <property type="term" value="F:integrin binding"/>
    <property type="evidence" value="ECO:0000250"/>
    <property type="project" value="UniProtKB"/>
</dbReference>
<dbReference type="GO" id="GO:0043539">
    <property type="term" value="F:protein serine/threonine kinase activator activity"/>
    <property type="evidence" value="ECO:0000318"/>
    <property type="project" value="GO_Central"/>
</dbReference>
<dbReference type="GO" id="GO:0051148">
    <property type="term" value="P:negative regulation of muscle cell differentiation"/>
    <property type="evidence" value="ECO:0000250"/>
    <property type="project" value="UniProtKB"/>
</dbReference>
<dbReference type="GO" id="GO:0042104">
    <property type="term" value="P:positive regulation of activated T cell proliferation"/>
    <property type="evidence" value="ECO:0000318"/>
    <property type="project" value="GO_Central"/>
</dbReference>
<dbReference type="GO" id="GO:0051781">
    <property type="term" value="P:positive regulation of cell division"/>
    <property type="evidence" value="ECO:0007669"/>
    <property type="project" value="UniProtKB-KW"/>
</dbReference>
<dbReference type="GO" id="GO:0008284">
    <property type="term" value="P:positive regulation of cell population proliferation"/>
    <property type="evidence" value="ECO:0000250"/>
    <property type="project" value="UniProtKB"/>
</dbReference>
<dbReference type="GO" id="GO:0046628">
    <property type="term" value="P:positive regulation of insulin receptor signaling pathway"/>
    <property type="evidence" value="ECO:0000318"/>
    <property type="project" value="GO_Central"/>
</dbReference>
<dbReference type="GO" id="GO:0043410">
    <property type="term" value="P:positive regulation of MAPK cascade"/>
    <property type="evidence" value="ECO:0000318"/>
    <property type="project" value="GO_Central"/>
</dbReference>
<dbReference type="GO" id="GO:0045944">
    <property type="term" value="P:positive regulation of transcription by RNA polymerase II"/>
    <property type="evidence" value="ECO:0000318"/>
    <property type="project" value="GO_Central"/>
</dbReference>
<dbReference type="GO" id="GO:1905564">
    <property type="term" value="P:positive regulation of vascular endothelial cell proliferation"/>
    <property type="evidence" value="ECO:0000318"/>
    <property type="project" value="GO_Central"/>
</dbReference>
<dbReference type="GO" id="GO:0051147">
    <property type="term" value="P:regulation of muscle cell differentiation"/>
    <property type="evidence" value="ECO:0000318"/>
    <property type="project" value="GO_Central"/>
</dbReference>
<dbReference type="CDD" id="cd04368">
    <property type="entry name" value="IlGF"/>
    <property type="match status" value="1"/>
</dbReference>
<dbReference type="FunFam" id="1.10.100.10:FF:000002">
    <property type="entry name" value="Insulin-like growth factor II preproprotein"/>
    <property type="match status" value="1"/>
</dbReference>
<dbReference type="Gene3D" id="1.10.100.10">
    <property type="entry name" value="Insulin-like"/>
    <property type="match status" value="1"/>
</dbReference>
<dbReference type="InterPro" id="IPR022334">
    <property type="entry name" value="IGF2"/>
</dbReference>
<dbReference type="InterPro" id="IPR013576">
    <property type="entry name" value="IGF2_C"/>
</dbReference>
<dbReference type="InterPro" id="IPR016179">
    <property type="entry name" value="Insulin-like"/>
</dbReference>
<dbReference type="InterPro" id="IPR022350">
    <property type="entry name" value="Insulin-like_growth_factor"/>
</dbReference>
<dbReference type="InterPro" id="IPR036438">
    <property type="entry name" value="Insulin-like_sf"/>
</dbReference>
<dbReference type="InterPro" id="IPR022353">
    <property type="entry name" value="Insulin_CS"/>
</dbReference>
<dbReference type="InterPro" id="IPR022352">
    <property type="entry name" value="Insulin_family"/>
</dbReference>
<dbReference type="PANTHER" id="PTHR46886">
    <property type="entry name" value="INSULIN-LIKE GROWTH FACTOR II"/>
    <property type="match status" value="1"/>
</dbReference>
<dbReference type="PANTHER" id="PTHR46886:SF1">
    <property type="entry name" value="INSULIN-LIKE GROWTH FACTOR II"/>
    <property type="match status" value="1"/>
</dbReference>
<dbReference type="Pfam" id="PF08365">
    <property type="entry name" value="IGF2_C"/>
    <property type="match status" value="1"/>
</dbReference>
<dbReference type="Pfam" id="PF00049">
    <property type="entry name" value="Insulin"/>
    <property type="match status" value="2"/>
</dbReference>
<dbReference type="PRINTS" id="PR02002">
    <property type="entry name" value="INSLNLIKEGF"/>
</dbReference>
<dbReference type="PRINTS" id="PR02006">
    <property type="entry name" value="INSLNLIKEGF2"/>
</dbReference>
<dbReference type="PRINTS" id="PR00276">
    <property type="entry name" value="INSULINFAMLY"/>
</dbReference>
<dbReference type="SMART" id="SM00078">
    <property type="entry name" value="IlGF"/>
    <property type="match status" value="1"/>
</dbReference>
<dbReference type="SUPFAM" id="SSF56994">
    <property type="entry name" value="Insulin-like"/>
    <property type="match status" value="1"/>
</dbReference>
<dbReference type="PROSITE" id="PS00262">
    <property type="entry name" value="INSULIN"/>
    <property type="match status" value="1"/>
</dbReference>
<organism>
    <name type="scientific">Gallus gallus</name>
    <name type="common">Chicken</name>
    <dbReference type="NCBI Taxonomy" id="9031"/>
    <lineage>
        <taxon>Eukaryota</taxon>
        <taxon>Metazoa</taxon>
        <taxon>Chordata</taxon>
        <taxon>Craniata</taxon>
        <taxon>Vertebrata</taxon>
        <taxon>Euteleostomi</taxon>
        <taxon>Archelosauria</taxon>
        <taxon>Archosauria</taxon>
        <taxon>Dinosauria</taxon>
        <taxon>Saurischia</taxon>
        <taxon>Theropoda</taxon>
        <taxon>Coelurosauria</taxon>
        <taxon>Aves</taxon>
        <taxon>Neognathae</taxon>
        <taxon>Galloanserae</taxon>
        <taxon>Galliformes</taxon>
        <taxon>Phasianidae</taxon>
        <taxon>Phasianinae</taxon>
        <taxon>Gallus</taxon>
    </lineage>
</organism>
<gene>
    <name evidence="2" type="primary">IGF2</name>
    <name evidence="6" type="synonym">IGF-2</name>
</gene>
<keyword id="KW-0903">Direct protein sequencing</keyword>
<keyword id="KW-1015">Disulfide bond</keyword>
<keyword id="KW-0339">Growth factor</keyword>
<keyword id="KW-0497">Mitogen</keyword>
<keyword id="KW-1185">Reference proteome</keyword>
<keyword id="KW-0964">Secreted</keyword>
<keyword id="KW-0732">Signal</keyword>